<feature type="chain" id="PRO_1000018510" description="Indole-3-glycerol phosphate synthase">
    <location>
        <begin position="1"/>
        <end position="281"/>
    </location>
</feature>
<evidence type="ECO:0000255" key="1">
    <source>
        <dbReference type="HAMAP-Rule" id="MF_00134"/>
    </source>
</evidence>
<name>TRPC_NITHX</name>
<accession>Q1QMJ9</accession>
<proteinExistence type="inferred from homology"/>
<gene>
    <name evidence="1" type="primary">trpC</name>
    <name type="ordered locus">Nham_1733</name>
</gene>
<keyword id="KW-0028">Amino-acid biosynthesis</keyword>
<keyword id="KW-0057">Aromatic amino acid biosynthesis</keyword>
<keyword id="KW-0210">Decarboxylase</keyword>
<keyword id="KW-0456">Lyase</keyword>
<keyword id="KW-1185">Reference proteome</keyword>
<keyword id="KW-0822">Tryptophan biosynthesis</keyword>
<reference key="1">
    <citation type="submission" date="2006-03" db="EMBL/GenBank/DDBJ databases">
        <title>Complete sequence of chromosome of Nitrobacter hamburgensis X14.</title>
        <authorList>
            <consortium name="US DOE Joint Genome Institute"/>
            <person name="Copeland A."/>
            <person name="Lucas S."/>
            <person name="Lapidus A."/>
            <person name="Barry K."/>
            <person name="Detter J.C."/>
            <person name="Glavina del Rio T."/>
            <person name="Hammon N."/>
            <person name="Israni S."/>
            <person name="Dalin E."/>
            <person name="Tice H."/>
            <person name="Pitluck S."/>
            <person name="Chain P."/>
            <person name="Malfatti S."/>
            <person name="Shin M."/>
            <person name="Vergez L."/>
            <person name="Schmutz J."/>
            <person name="Larimer F."/>
            <person name="Land M."/>
            <person name="Hauser L."/>
            <person name="Kyrpides N."/>
            <person name="Ivanova N."/>
            <person name="Ward B."/>
            <person name="Arp D."/>
            <person name="Klotz M."/>
            <person name="Stein L."/>
            <person name="O'Mullan G."/>
            <person name="Starkenburg S."/>
            <person name="Sayavedra L."/>
            <person name="Poret-Peterson A.T."/>
            <person name="Gentry M.E."/>
            <person name="Bruce D."/>
            <person name="Richardson P."/>
        </authorList>
    </citation>
    <scope>NUCLEOTIDE SEQUENCE [LARGE SCALE GENOMIC DNA]</scope>
    <source>
        <strain>DSM 10229 / NCIMB 13809 / X14</strain>
    </source>
</reference>
<dbReference type="EC" id="4.1.1.48" evidence="1"/>
<dbReference type="EMBL" id="CP000319">
    <property type="protein sequence ID" value="ABE62548.1"/>
    <property type="molecule type" value="Genomic_DNA"/>
</dbReference>
<dbReference type="RefSeq" id="WP_011510230.1">
    <property type="nucleotide sequence ID" value="NC_007964.1"/>
</dbReference>
<dbReference type="SMR" id="Q1QMJ9"/>
<dbReference type="STRING" id="323097.Nham_1733"/>
<dbReference type="KEGG" id="nha:Nham_1733"/>
<dbReference type="eggNOG" id="COG0134">
    <property type="taxonomic scope" value="Bacteria"/>
</dbReference>
<dbReference type="HOGENOM" id="CLU_034247_2_0_5"/>
<dbReference type="OrthoDB" id="9804217at2"/>
<dbReference type="UniPathway" id="UPA00035">
    <property type="reaction ID" value="UER00043"/>
</dbReference>
<dbReference type="Proteomes" id="UP000001953">
    <property type="component" value="Chromosome"/>
</dbReference>
<dbReference type="GO" id="GO:0004425">
    <property type="term" value="F:indole-3-glycerol-phosphate synthase activity"/>
    <property type="evidence" value="ECO:0007669"/>
    <property type="project" value="UniProtKB-UniRule"/>
</dbReference>
<dbReference type="GO" id="GO:0004640">
    <property type="term" value="F:phosphoribosylanthranilate isomerase activity"/>
    <property type="evidence" value="ECO:0007669"/>
    <property type="project" value="TreeGrafter"/>
</dbReference>
<dbReference type="GO" id="GO:0000162">
    <property type="term" value="P:L-tryptophan biosynthetic process"/>
    <property type="evidence" value="ECO:0007669"/>
    <property type="project" value="UniProtKB-UniRule"/>
</dbReference>
<dbReference type="CDD" id="cd00331">
    <property type="entry name" value="IGPS"/>
    <property type="match status" value="1"/>
</dbReference>
<dbReference type="FunFam" id="3.20.20.70:FF:000024">
    <property type="entry name" value="Indole-3-glycerol phosphate synthase"/>
    <property type="match status" value="1"/>
</dbReference>
<dbReference type="Gene3D" id="3.20.20.70">
    <property type="entry name" value="Aldolase class I"/>
    <property type="match status" value="1"/>
</dbReference>
<dbReference type="HAMAP" id="MF_00134_B">
    <property type="entry name" value="IGPS_B"/>
    <property type="match status" value="1"/>
</dbReference>
<dbReference type="InterPro" id="IPR013785">
    <property type="entry name" value="Aldolase_TIM"/>
</dbReference>
<dbReference type="InterPro" id="IPR045186">
    <property type="entry name" value="Indole-3-glycerol_P_synth"/>
</dbReference>
<dbReference type="InterPro" id="IPR013798">
    <property type="entry name" value="Indole-3-glycerol_P_synth_dom"/>
</dbReference>
<dbReference type="InterPro" id="IPR001468">
    <property type="entry name" value="Indole-3-GlycerolPSynthase_CS"/>
</dbReference>
<dbReference type="InterPro" id="IPR011060">
    <property type="entry name" value="RibuloseP-bd_barrel"/>
</dbReference>
<dbReference type="NCBIfam" id="NF001370">
    <property type="entry name" value="PRK00278.1-2"/>
    <property type="match status" value="1"/>
</dbReference>
<dbReference type="NCBIfam" id="NF001373">
    <property type="entry name" value="PRK00278.1-6"/>
    <property type="match status" value="1"/>
</dbReference>
<dbReference type="NCBIfam" id="NF001377">
    <property type="entry name" value="PRK00278.2-4"/>
    <property type="match status" value="1"/>
</dbReference>
<dbReference type="PANTHER" id="PTHR22854:SF2">
    <property type="entry name" value="INDOLE-3-GLYCEROL-PHOSPHATE SYNTHASE"/>
    <property type="match status" value="1"/>
</dbReference>
<dbReference type="PANTHER" id="PTHR22854">
    <property type="entry name" value="TRYPTOPHAN BIOSYNTHESIS PROTEIN"/>
    <property type="match status" value="1"/>
</dbReference>
<dbReference type="Pfam" id="PF00218">
    <property type="entry name" value="IGPS"/>
    <property type="match status" value="1"/>
</dbReference>
<dbReference type="SUPFAM" id="SSF51366">
    <property type="entry name" value="Ribulose-phoshate binding barrel"/>
    <property type="match status" value="1"/>
</dbReference>
<dbReference type="PROSITE" id="PS00614">
    <property type="entry name" value="IGPS"/>
    <property type="match status" value="1"/>
</dbReference>
<organism>
    <name type="scientific">Nitrobacter hamburgensis (strain DSM 10229 / NCIMB 13809 / X14)</name>
    <dbReference type="NCBI Taxonomy" id="323097"/>
    <lineage>
        <taxon>Bacteria</taxon>
        <taxon>Pseudomonadati</taxon>
        <taxon>Pseudomonadota</taxon>
        <taxon>Alphaproteobacteria</taxon>
        <taxon>Hyphomicrobiales</taxon>
        <taxon>Nitrobacteraceae</taxon>
        <taxon>Nitrobacter</taxon>
    </lineage>
</organism>
<sequence>MADILTKIEAYKREEIASAKRARSLSEVLAAAEAASPPRGFVQTIRAKLASGDYALIAEVKKASPSKGLIRADFDPPSLARAYEAGGAACLSVLTDTPSFQGHLDFMVAARTATSLPVLRKDFMFDTYQVVEARAHGADCILIIMAALDDAAAKDIEAAALDLGMDALLEIHNRAELDRALKLRSPMIGVNNRNLRTFETTLETSEALAPHIPKDRVMVGESGIFAAADLARLEQVGISTFLVGESLMRQADVTAATRALLARGGQSSPQVVPANAGTHNP</sequence>
<protein>
    <recommendedName>
        <fullName evidence="1">Indole-3-glycerol phosphate synthase</fullName>
        <shortName evidence="1">IGPS</shortName>
        <ecNumber evidence="1">4.1.1.48</ecNumber>
    </recommendedName>
</protein>
<comment type="catalytic activity">
    <reaction evidence="1">
        <text>1-(2-carboxyphenylamino)-1-deoxy-D-ribulose 5-phosphate + H(+) = (1S,2R)-1-C-(indol-3-yl)glycerol 3-phosphate + CO2 + H2O</text>
        <dbReference type="Rhea" id="RHEA:23476"/>
        <dbReference type="ChEBI" id="CHEBI:15377"/>
        <dbReference type="ChEBI" id="CHEBI:15378"/>
        <dbReference type="ChEBI" id="CHEBI:16526"/>
        <dbReference type="ChEBI" id="CHEBI:58613"/>
        <dbReference type="ChEBI" id="CHEBI:58866"/>
        <dbReference type="EC" id="4.1.1.48"/>
    </reaction>
</comment>
<comment type="pathway">
    <text evidence="1">Amino-acid biosynthesis; L-tryptophan biosynthesis; L-tryptophan from chorismate: step 4/5.</text>
</comment>
<comment type="similarity">
    <text evidence="1">Belongs to the TrpC family.</text>
</comment>